<feature type="chain" id="PRO_0000111798" description="5'-nucleotidase SurE">
    <location>
        <begin position="1"/>
        <end position="263"/>
    </location>
</feature>
<feature type="binding site" evidence="1">
    <location>
        <position position="8"/>
    </location>
    <ligand>
        <name>a divalent metal cation</name>
        <dbReference type="ChEBI" id="CHEBI:60240"/>
    </ligand>
</feature>
<feature type="binding site" evidence="1">
    <location>
        <position position="9"/>
    </location>
    <ligand>
        <name>a divalent metal cation</name>
        <dbReference type="ChEBI" id="CHEBI:60240"/>
    </ligand>
</feature>
<feature type="binding site" evidence="1">
    <location>
        <position position="40"/>
    </location>
    <ligand>
        <name>a divalent metal cation</name>
        <dbReference type="ChEBI" id="CHEBI:60240"/>
    </ligand>
</feature>
<feature type="binding site" evidence="1">
    <location>
        <position position="93"/>
    </location>
    <ligand>
        <name>a divalent metal cation</name>
        <dbReference type="ChEBI" id="CHEBI:60240"/>
    </ligand>
</feature>
<organism>
    <name type="scientific">Caulobacter vibrioides (strain ATCC 19089 / CIP 103742 / CB 15)</name>
    <name type="common">Caulobacter crescentus</name>
    <dbReference type="NCBI Taxonomy" id="190650"/>
    <lineage>
        <taxon>Bacteria</taxon>
        <taxon>Pseudomonadati</taxon>
        <taxon>Pseudomonadota</taxon>
        <taxon>Alphaproteobacteria</taxon>
        <taxon>Caulobacterales</taxon>
        <taxon>Caulobacteraceae</taxon>
        <taxon>Caulobacter</taxon>
    </lineage>
</organism>
<protein>
    <recommendedName>
        <fullName evidence="1">5'-nucleotidase SurE</fullName>
        <ecNumber evidence="1">3.1.3.5</ecNumber>
    </recommendedName>
    <alternativeName>
        <fullName evidence="1">Nucleoside 5'-monophosphate phosphohydrolase</fullName>
    </alternativeName>
</protein>
<keyword id="KW-0963">Cytoplasm</keyword>
<keyword id="KW-0378">Hydrolase</keyword>
<keyword id="KW-0479">Metal-binding</keyword>
<keyword id="KW-0547">Nucleotide-binding</keyword>
<keyword id="KW-1185">Reference proteome</keyword>
<sequence>MRILLTNDDGIHAPGLQALEKIARALSDDVWICAPEYEQSGASRALTLADPIRVRKLDSRRFAVEGTPTDCVMMAVQHLIEGGRPDLVLSGVNRGQNIAEDVTLSGTVAGAIEGMAMGIPSIALSQSMNYFHDEIVAHWETAEAFAPGIIQRLLEVGWPADVVMNVNFPALPPESVKAVEVTRQGFRDGHMRHMDKRTDLRGRDYYWMGFTAKASQPAEGTDLRAVYEGRISVTPLHIDLTHNETVHTLKGVLGGAPPRKVGA</sequence>
<reference key="1">
    <citation type="journal article" date="2001" name="Proc. Natl. Acad. Sci. U.S.A.">
        <title>Complete genome sequence of Caulobacter crescentus.</title>
        <authorList>
            <person name="Nierman W.C."/>
            <person name="Feldblyum T.V."/>
            <person name="Laub M.T."/>
            <person name="Paulsen I.T."/>
            <person name="Nelson K.E."/>
            <person name="Eisen J.A."/>
            <person name="Heidelberg J.F."/>
            <person name="Alley M.R.K."/>
            <person name="Ohta N."/>
            <person name="Maddock J.R."/>
            <person name="Potocka I."/>
            <person name="Nelson W.C."/>
            <person name="Newton A."/>
            <person name="Stephens C."/>
            <person name="Phadke N.D."/>
            <person name="Ely B."/>
            <person name="DeBoy R.T."/>
            <person name="Dodson R.J."/>
            <person name="Durkin A.S."/>
            <person name="Gwinn M.L."/>
            <person name="Haft D.H."/>
            <person name="Kolonay J.F."/>
            <person name="Smit J."/>
            <person name="Craven M.B."/>
            <person name="Khouri H.M."/>
            <person name="Shetty J."/>
            <person name="Berry K.J."/>
            <person name="Utterback T.R."/>
            <person name="Tran K."/>
            <person name="Wolf A.M."/>
            <person name="Vamathevan J.J."/>
            <person name="Ermolaeva M.D."/>
            <person name="White O."/>
            <person name="Salzberg S.L."/>
            <person name="Venter J.C."/>
            <person name="Shapiro L."/>
            <person name="Fraser C.M."/>
        </authorList>
    </citation>
    <scope>NUCLEOTIDE SEQUENCE [LARGE SCALE GENOMIC DNA]</scope>
    <source>
        <strain>ATCC 19089 / CIP 103742 / CB 15</strain>
    </source>
</reference>
<comment type="function">
    <text evidence="1">Nucleotidase that shows phosphatase activity on nucleoside 5'-monophosphates.</text>
</comment>
<comment type="catalytic activity">
    <reaction evidence="1">
        <text>a ribonucleoside 5'-phosphate + H2O = a ribonucleoside + phosphate</text>
        <dbReference type="Rhea" id="RHEA:12484"/>
        <dbReference type="ChEBI" id="CHEBI:15377"/>
        <dbReference type="ChEBI" id="CHEBI:18254"/>
        <dbReference type="ChEBI" id="CHEBI:43474"/>
        <dbReference type="ChEBI" id="CHEBI:58043"/>
        <dbReference type="EC" id="3.1.3.5"/>
    </reaction>
</comment>
<comment type="cofactor">
    <cofactor evidence="1">
        <name>a divalent metal cation</name>
        <dbReference type="ChEBI" id="CHEBI:60240"/>
    </cofactor>
    <text evidence="1">Binds 1 divalent metal cation per subunit.</text>
</comment>
<comment type="subcellular location">
    <subcellularLocation>
        <location evidence="1">Cytoplasm</location>
    </subcellularLocation>
</comment>
<comment type="similarity">
    <text evidence="1">Belongs to the SurE nucleotidase family.</text>
</comment>
<name>SURE_CAUVC</name>
<evidence type="ECO:0000255" key="1">
    <source>
        <dbReference type="HAMAP-Rule" id="MF_00060"/>
    </source>
</evidence>
<dbReference type="EC" id="3.1.3.5" evidence="1"/>
<dbReference type="EMBL" id="AE005673">
    <property type="protein sequence ID" value="AAK23973.1"/>
    <property type="molecule type" value="Genomic_DNA"/>
</dbReference>
<dbReference type="PIR" id="A87497">
    <property type="entry name" value="A87497"/>
</dbReference>
<dbReference type="RefSeq" id="NP_420805.1">
    <property type="nucleotide sequence ID" value="NC_002696.2"/>
</dbReference>
<dbReference type="RefSeq" id="WP_010919864.1">
    <property type="nucleotide sequence ID" value="NC_002696.2"/>
</dbReference>
<dbReference type="SMR" id="Q9A6T5"/>
<dbReference type="STRING" id="190650.CC_1998"/>
<dbReference type="EnsemblBacteria" id="AAK23973">
    <property type="protein sequence ID" value="AAK23973"/>
    <property type="gene ID" value="CC_1998"/>
</dbReference>
<dbReference type="KEGG" id="ccr:CC_1998"/>
<dbReference type="PATRIC" id="fig|190650.5.peg.2017"/>
<dbReference type="eggNOG" id="COG0496">
    <property type="taxonomic scope" value="Bacteria"/>
</dbReference>
<dbReference type="HOGENOM" id="CLU_045192_1_2_5"/>
<dbReference type="BioCyc" id="CAULO:CC1998-MONOMER"/>
<dbReference type="Proteomes" id="UP000001816">
    <property type="component" value="Chromosome"/>
</dbReference>
<dbReference type="GO" id="GO:0005737">
    <property type="term" value="C:cytoplasm"/>
    <property type="evidence" value="ECO:0007669"/>
    <property type="project" value="UniProtKB-SubCell"/>
</dbReference>
<dbReference type="GO" id="GO:0008254">
    <property type="term" value="F:3'-nucleotidase activity"/>
    <property type="evidence" value="ECO:0007669"/>
    <property type="project" value="TreeGrafter"/>
</dbReference>
<dbReference type="GO" id="GO:0008253">
    <property type="term" value="F:5'-nucleotidase activity"/>
    <property type="evidence" value="ECO:0007669"/>
    <property type="project" value="UniProtKB-UniRule"/>
</dbReference>
<dbReference type="GO" id="GO:0004309">
    <property type="term" value="F:exopolyphosphatase activity"/>
    <property type="evidence" value="ECO:0007669"/>
    <property type="project" value="TreeGrafter"/>
</dbReference>
<dbReference type="GO" id="GO:0046872">
    <property type="term" value="F:metal ion binding"/>
    <property type="evidence" value="ECO:0007669"/>
    <property type="project" value="UniProtKB-UniRule"/>
</dbReference>
<dbReference type="GO" id="GO:0000166">
    <property type="term" value="F:nucleotide binding"/>
    <property type="evidence" value="ECO:0007669"/>
    <property type="project" value="UniProtKB-KW"/>
</dbReference>
<dbReference type="FunFam" id="3.40.1210.10:FF:000001">
    <property type="entry name" value="5'/3'-nucleotidase SurE"/>
    <property type="match status" value="1"/>
</dbReference>
<dbReference type="Gene3D" id="3.40.1210.10">
    <property type="entry name" value="Survival protein SurE-like phosphatase/nucleotidase"/>
    <property type="match status" value="1"/>
</dbReference>
<dbReference type="HAMAP" id="MF_00060">
    <property type="entry name" value="SurE"/>
    <property type="match status" value="1"/>
</dbReference>
<dbReference type="InterPro" id="IPR030048">
    <property type="entry name" value="SurE"/>
</dbReference>
<dbReference type="InterPro" id="IPR002828">
    <property type="entry name" value="SurE-like_Pase/nucleotidase"/>
</dbReference>
<dbReference type="InterPro" id="IPR036523">
    <property type="entry name" value="SurE-like_sf"/>
</dbReference>
<dbReference type="NCBIfam" id="NF001490">
    <property type="entry name" value="PRK00346.1-4"/>
    <property type="match status" value="1"/>
</dbReference>
<dbReference type="NCBIfam" id="TIGR00087">
    <property type="entry name" value="surE"/>
    <property type="match status" value="1"/>
</dbReference>
<dbReference type="PANTHER" id="PTHR30457">
    <property type="entry name" value="5'-NUCLEOTIDASE SURE"/>
    <property type="match status" value="1"/>
</dbReference>
<dbReference type="PANTHER" id="PTHR30457:SF12">
    <property type="entry name" value="5'_3'-NUCLEOTIDASE SURE"/>
    <property type="match status" value="1"/>
</dbReference>
<dbReference type="Pfam" id="PF01975">
    <property type="entry name" value="SurE"/>
    <property type="match status" value="1"/>
</dbReference>
<dbReference type="SUPFAM" id="SSF64167">
    <property type="entry name" value="SurE-like"/>
    <property type="match status" value="1"/>
</dbReference>
<gene>
    <name evidence="1" type="primary">surE</name>
    <name type="ordered locus">CC_1998</name>
</gene>
<proteinExistence type="inferred from homology"/>
<accession>Q9A6T5</accession>